<protein>
    <recommendedName>
        <fullName>Transcriptional regulator of yeast form adherence 5</fullName>
    </recommendedName>
</protein>
<accession>Q5A4K7</accession>
<accession>A0A1D8PPN7</accession>
<keyword id="KW-0130">Cell adhesion</keyword>
<keyword id="KW-0479">Metal-binding</keyword>
<keyword id="KW-0539">Nucleus</keyword>
<keyword id="KW-1185">Reference proteome</keyword>
<keyword id="KW-0677">Repeat</keyword>
<keyword id="KW-0804">Transcription</keyword>
<keyword id="KW-0805">Transcription regulation</keyword>
<keyword id="KW-0862">Zinc</keyword>
<keyword id="KW-0863">Zinc-finger</keyword>
<sequence length="988" mass="115741">MAAQKKYICAFCARAFTRSEHKQRHERSHTNEKPFHCLHCTSSFVRRDLLQRHCRTVHHTNLNPSTLPSNKSLKNPTTNPLDLSNNEGTTTTTKTGNRKNNSNKNGAKNDKSTNPNPAVSNDDNRSSVGDITTQLPFQVQFNTQLPYQQQQQQQQQQQYPILQNQGIPMKQSFSMESDQHSLTTFDSPTSSLGVSMTPSGSTNSEIVLQQQQQTTKRRKRSQENNSNNNTKLIAKELNHDLVHLLSITKKLTTLLQHYDNVKVNITDSFLIGYVHIQQQAKNFTIFEKILKDLVYYLNTYHINNLQQQNQFPPSQQQNHYTINHFKIGISYCVIALGFLIDHKPNRAIQFFKKSWNLLIKTLIPQYNSNNNLLDQIEILYNLFLLCYIYLQFNLETFDINEKQHEHHSYEQGDEHEDHHQEQVYINNQVILNYLNDISFIIASNLKDVATNNLIDHNLNLFWNIYILLSSYITKEPPKIHQILLNKNLKQNDTLVSLMQKFSKSFINMDMDDEQLKLVVVAALNNELKLYFNDTVDEFEPENSKNKRKFIYDNRNVLHNAIILINKSINFYNPSASLVNDAKMFELKLFELFKKNLIINSPMKYHELFNNYIFIPQHYYHWQLLTLTLKEINQNNVIFNQIHSILTTTTGSNVCFSFIDFENLLKNSFLNYKANPIVINNNLLIISYPIIILSNYLNLDNLMTSMGQMNQLQFINLNIFIIEWYLIMMKVLIIIWDDTLIDFEDNYILQTLMYILLDNKSCLLKRLNIDTSKLEYDVNCERLSFNQKWFWIIKLKFDSIFENWMNFLKNKNNNVTNNSNVTNTSTTGITNTNHNHNDSYLHHFNVNVSNFKFNLNKYLNEYFVTGDFKFREQLDQNDPDQFQGSMSMDEEPDFTTAMQTSQTINSFMPIHNHNSRNQVYQQHNQDTPMTSRRDSTNINENNIAQTSSFISNSNYQGSNSNNMINYNEFQDRNYKRSSSITLGILAQTV</sequence>
<reference key="1">
    <citation type="journal article" date="2004" name="Proc. Natl. Acad. Sci. U.S.A.">
        <title>The diploid genome sequence of Candida albicans.</title>
        <authorList>
            <person name="Jones T."/>
            <person name="Federspiel N.A."/>
            <person name="Chibana H."/>
            <person name="Dungan J."/>
            <person name="Kalman S."/>
            <person name="Magee B.B."/>
            <person name="Newport G."/>
            <person name="Thorstenson Y.R."/>
            <person name="Agabian N."/>
            <person name="Magee P.T."/>
            <person name="Davis R.W."/>
            <person name="Scherer S."/>
        </authorList>
    </citation>
    <scope>NUCLEOTIDE SEQUENCE [LARGE SCALE GENOMIC DNA]</scope>
    <source>
        <strain>SC5314 / ATCC MYA-2876</strain>
    </source>
</reference>
<reference key="2">
    <citation type="journal article" date="2007" name="Genome Biol.">
        <title>Assembly of the Candida albicans genome into sixteen supercontigs aligned on the eight chromosomes.</title>
        <authorList>
            <person name="van het Hoog M."/>
            <person name="Rast T.J."/>
            <person name="Martchenko M."/>
            <person name="Grindle S."/>
            <person name="Dignard D."/>
            <person name="Hogues H."/>
            <person name="Cuomo C."/>
            <person name="Berriman M."/>
            <person name="Scherer S."/>
            <person name="Magee B.B."/>
            <person name="Whiteway M."/>
            <person name="Chibana H."/>
            <person name="Nantel A."/>
            <person name="Magee P.T."/>
        </authorList>
    </citation>
    <scope>GENOME REANNOTATION</scope>
    <source>
        <strain>SC5314 / ATCC MYA-2876</strain>
    </source>
</reference>
<reference key="3">
    <citation type="journal article" date="2013" name="Genome Biol.">
        <title>Assembly of a phased diploid Candida albicans genome facilitates allele-specific measurements and provides a simple model for repeat and indel structure.</title>
        <authorList>
            <person name="Muzzey D."/>
            <person name="Schwartz K."/>
            <person name="Weissman J.S."/>
            <person name="Sherlock G."/>
        </authorList>
    </citation>
    <scope>NUCLEOTIDE SEQUENCE [LARGE SCALE GENOMIC DNA]</scope>
    <scope>GENOME REANNOTATION</scope>
    <source>
        <strain>SC5314 / ATCC MYA-2876</strain>
    </source>
</reference>
<reference key="4">
    <citation type="journal article" date="2012" name="PLoS Pathog.">
        <title>Portrait of Candida albicans adherence regulators.</title>
        <authorList>
            <person name="Finkel J.S."/>
            <person name="Xu W."/>
            <person name="Huang D."/>
            <person name="Hill E.M."/>
            <person name="Desai J.V."/>
            <person name="Woolford C.A."/>
            <person name="Nett J.E."/>
            <person name="Taff H."/>
            <person name="Norice C.T."/>
            <person name="Andes D.R."/>
            <person name="Lanni F."/>
            <person name="Mitchell A.P."/>
        </authorList>
    </citation>
    <scope>FUNCTION</scope>
    <scope>DISRUPTION PHENOTYPE</scope>
</reference>
<organism>
    <name type="scientific">Candida albicans (strain SC5314 / ATCC MYA-2876)</name>
    <name type="common">Yeast</name>
    <dbReference type="NCBI Taxonomy" id="237561"/>
    <lineage>
        <taxon>Eukaryota</taxon>
        <taxon>Fungi</taxon>
        <taxon>Dikarya</taxon>
        <taxon>Ascomycota</taxon>
        <taxon>Saccharomycotina</taxon>
        <taxon>Pichiomycetes</taxon>
        <taxon>Debaryomycetaceae</taxon>
        <taxon>Candida/Lodderomyces clade</taxon>
        <taxon>Candida</taxon>
    </lineage>
</organism>
<name>TRY5_CANAL</name>
<comment type="function">
    <text evidence="3">Transcription factor required for yeast cell adherence to silicone substrate.</text>
</comment>
<comment type="subcellular location">
    <subcellularLocation>
        <location evidence="4">Nucleus</location>
    </subcellularLocation>
</comment>
<comment type="disruption phenotype">
    <text evidence="3">Decreases cell adherence to silicone substrate.</text>
</comment>
<evidence type="ECO:0000255" key="1">
    <source>
        <dbReference type="PROSITE-ProRule" id="PRU00042"/>
    </source>
</evidence>
<evidence type="ECO:0000256" key="2">
    <source>
        <dbReference type="SAM" id="MobiDB-lite"/>
    </source>
</evidence>
<evidence type="ECO:0000269" key="3">
    <source>
    </source>
</evidence>
<evidence type="ECO:0000305" key="4"/>
<gene>
    <name type="primary">TRY5</name>
    <name type="ordered locus">CAALFM_C601500CA</name>
    <name type="ORF">CaO19.10938</name>
    <name type="ORF">CaO19.3434</name>
</gene>
<proteinExistence type="predicted"/>
<feature type="chain" id="PRO_0000426066" description="Transcriptional regulator of yeast form adherence 5">
    <location>
        <begin position="1"/>
        <end position="988"/>
    </location>
</feature>
<feature type="zinc finger region" description="C2H2-type 1" evidence="1">
    <location>
        <begin position="7"/>
        <end position="29"/>
    </location>
</feature>
<feature type="zinc finger region" description="C2H2-type 2" evidence="1">
    <location>
        <begin position="35"/>
        <end position="59"/>
    </location>
</feature>
<feature type="region of interest" description="Disordered" evidence="2">
    <location>
        <begin position="59"/>
        <end position="129"/>
    </location>
</feature>
<feature type="region of interest" description="Disordered" evidence="2">
    <location>
        <begin position="174"/>
        <end position="229"/>
    </location>
</feature>
<feature type="compositionally biased region" description="Polar residues" evidence="2">
    <location>
        <begin position="59"/>
        <end position="83"/>
    </location>
</feature>
<feature type="compositionally biased region" description="Low complexity" evidence="2">
    <location>
        <begin position="84"/>
        <end position="106"/>
    </location>
</feature>
<feature type="compositionally biased region" description="Polar residues" evidence="2">
    <location>
        <begin position="113"/>
        <end position="129"/>
    </location>
</feature>
<feature type="compositionally biased region" description="Polar residues" evidence="2">
    <location>
        <begin position="174"/>
        <end position="208"/>
    </location>
</feature>
<dbReference type="EMBL" id="CP017628">
    <property type="protein sequence ID" value="AOW30091.1"/>
    <property type="molecule type" value="Genomic_DNA"/>
</dbReference>
<dbReference type="RefSeq" id="XP_716741.2">
    <property type="nucleotide sequence ID" value="XM_711648.2"/>
</dbReference>
<dbReference type="SMR" id="Q5A4K7"/>
<dbReference type="STRING" id="237561.Q5A4K7"/>
<dbReference type="EnsemblFungi" id="C6_01500C_A-T">
    <property type="protein sequence ID" value="C6_01500C_A-T-p1"/>
    <property type="gene ID" value="C6_01500C_A"/>
</dbReference>
<dbReference type="GeneID" id="3641619"/>
<dbReference type="KEGG" id="cal:CAALFM_C601500CA"/>
<dbReference type="CGD" id="CAL0000180184">
    <property type="gene designation" value="TRY5"/>
</dbReference>
<dbReference type="VEuPathDB" id="FungiDB:C6_01500C_A"/>
<dbReference type="HOGENOM" id="CLU_007678_0_0_1"/>
<dbReference type="InParanoid" id="Q5A4K7"/>
<dbReference type="OrthoDB" id="654211at2759"/>
<dbReference type="PRO" id="PR:Q5A4K7"/>
<dbReference type="Proteomes" id="UP000000559">
    <property type="component" value="Chromosome 6"/>
</dbReference>
<dbReference type="GO" id="GO:0000785">
    <property type="term" value="C:chromatin"/>
    <property type="evidence" value="ECO:0000318"/>
    <property type="project" value="GO_Central"/>
</dbReference>
<dbReference type="GO" id="GO:0005634">
    <property type="term" value="C:nucleus"/>
    <property type="evidence" value="ECO:0007669"/>
    <property type="project" value="UniProtKB-SubCell"/>
</dbReference>
<dbReference type="GO" id="GO:0000981">
    <property type="term" value="F:DNA-binding transcription factor activity, RNA polymerase II-specific"/>
    <property type="evidence" value="ECO:0000318"/>
    <property type="project" value="GO_Central"/>
</dbReference>
<dbReference type="GO" id="GO:0000978">
    <property type="term" value="F:RNA polymerase II cis-regulatory region sequence-specific DNA binding"/>
    <property type="evidence" value="ECO:0000318"/>
    <property type="project" value="GO_Central"/>
</dbReference>
<dbReference type="GO" id="GO:0008270">
    <property type="term" value="F:zinc ion binding"/>
    <property type="evidence" value="ECO:0007669"/>
    <property type="project" value="UniProtKB-KW"/>
</dbReference>
<dbReference type="GO" id="GO:0007155">
    <property type="term" value="P:cell adhesion"/>
    <property type="evidence" value="ECO:0007669"/>
    <property type="project" value="UniProtKB-KW"/>
</dbReference>
<dbReference type="GO" id="GO:1900189">
    <property type="term" value="P:positive regulation of cell adhesion involved in single-species biofilm formation"/>
    <property type="evidence" value="ECO:0000315"/>
    <property type="project" value="CGD"/>
</dbReference>
<dbReference type="GO" id="GO:0010811">
    <property type="term" value="P:positive regulation of cell-substrate adhesion"/>
    <property type="evidence" value="ECO:0000315"/>
    <property type="project" value="CGD"/>
</dbReference>
<dbReference type="GO" id="GO:0006357">
    <property type="term" value="P:regulation of transcription by RNA polymerase II"/>
    <property type="evidence" value="ECO:0000315"/>
    <property type="project" value="CGD"/>
</dbReference>
<dbReference type="GO" id="GO:0044011">
    <property type="term" value="P:single-species biofilm formation on inanimate substrate"/>
    <property type="evidence" value="ECO:0000315"/>
    <property type="project" value="CGD"/>
</dbReference>
<dbReference type="Gene3D" id="3.30.160.60">
    <property type="entry name" value="Classic Zinc Finger"/>
    <property type="match status" value="2"/>
</dbReference>
<dbReference type="InterPro" id="IPR051059">
    <property type="entry name" value="VerF-like"/>
</dbReference>
<dbReference type="InterPro" id="IPR036236">
    <property type="entry name" value="Znf_C2H2_sf"/>
</dbReference>
<dbReference type="InterPro" id="IPR013087">
    <property type="entry name" value="Znf_C2H2_type"/>
</dbReference>
<dbReference type="PANTHER" id="PTHR40626">
    <property type="entry name" value="MIP31509P"/>
    <property type="match status" value="1"/>
</dbReference>
<dbReference type="PANTHER" id="PTHR40626:SF34">
    <property type="entry name" value="ZINC FINGER PROTEIN YGR067C"/>
    <property type="match status" value="1"/>
</dbReference>
<dbReference type="SMART" id="SM00355">
    <property type="entry name" value="ZnF_C2H2"/>
    <property type="match status" value="2"/>
</dbReference>
<dbReference type="SUPFAM" id="SSF57667">
    <property type="entry name" value="beta-beta-alpha zinc fingers"/>
    <property type="match status" value="1"/>
</dbReference>
<dbReference type="PROSITE" id="PS00028">
    <property type="entry name" value="ZINC_FINGER_C2H2_1"/>
    <property type="match status" value="2"/>
</dbReference>
<dbReference type="PROSITE" id="PS50157">
    <property type="entry name" value="ZINC_FINGER_C2H2_2"/>
    <property type="match status" value="2"/>
</dbReference>